<protein>
    <recommendedName>
        <fullName evidence="1">S-adenosylmethionine decarboxylase proenzyme</fullName>
        <shortName evidence="1">AdoMetDC</shortName>
        <shortName evidence="1">SAMDC</shortName>
        <ecNumber evidence="1">4.1.1.50</ecNumber>
    </recommendedName>
    <component>
        <recommendedName>
            <fullName evidence="1">S-adenosylmethionine decarboxylase beta chain</fullName>
        </recommendedName>
    </component>
    <component>
        <recommendedName>
            <fullName evidence="1">S-adenosylmethionine decarboxylase alpha chain</fullName>
        </recommendedName>
    </component>
</protein>
<comment type="function">
    <text evidence="1">Catalyzes the decarboxylation of S-adenosylmethionine to S-adenosylmethioninamine (dcAdoMet), the propylamine donor required for the synthesis of the polyamines spermine and spermidine from the diamine putrescine.</text>
</comment>
<comment type="catalytic activity">
    <reaction evidence="1">
        <text>S-adenosyl-L-methionine + H(+) = S-adenosyl 3-(methylsulfanyl)propylamine + CO2</text>
        <dbReference type="Rhea" id="RHEA:15981"/>
        <dbReference type="ChEBI" id="CHEBI:15378"/>
        <dbReference type="ChEBI" id="CHEBI:16526"/>
        <dbReference type="ChEBI" id="CHEBI:57443"/>
        <dbReference type="ChEBI" id="CHEBI:59789"/>
        <dbReference type="EC" id="4.1.1.50"/>
    </reaction>
</comment>
<comment type="cofactor">
    <cofactor evidence="1">
        <name>pyruvate</name>
        <dbReference type="ChEBI" id="CHEBI:15361"/>
    </cofactor>
    <text evidence="1">Binds 1 pyruvoyl group covalently per subunit.</text>
</comment>
<comment type="pathway">
    <text evidence="1">Amine and polyamine biosynthesis; S-adenosylmethioninamine biosynthesis; S-adenosylmethioninamine from S-adenosyl-L-methionine: step 1/1.</text>
</comment>
<comment type="subunit">
    <text evidence="1">Heterotetramer of two alpha and two beta chains arranged as a dimer of alpha/beta heterodimers.</text>
</comment>
<comment type="PTM">
    <text evidence="1">Is synthesized initially as an inactive proenzyme. Formation of the active enzyme involves a self-maturation process in which the active site pyruvoyl group is generated from an internal serine residue via an autocatalytic post-translational modification. Two non-identical subunits are generated from the proenzyme in this reaction, and the pyruvate is formed at the N-terminus of the alpha chain, which is derived from the carboxyl end of the proenzyme. The post-translation cleavage follows an unusual pathway, termed non-hydrolytic serinolysis, in which the side chain hydroxyl group of the serine supplies its oxygen atom to form the C-terminus of the beta chain, while the remainder of the serine residue undergoes an oxidative deamination to produce ammonia and the pyruvoyl group blocking the N-terminus of the alpha chain.</text>
</comment>
<comment type="similarity">
    <text evidence="1">Belongs to the prokaryotic AdoMetDC family. Type 1 subfamily.</text>
</comment>
<name>SPEH_CALS4</name>
<keyword id="KW-0068">Autocatalytic cleavage</keyword>
<keyword id="KW-0210">Decarboxylase</keyword>
<keyword id="KW-0456">Lyase</keyword>
<keyword id="KW-0620">Polyamine biosynthesis</keyword>
<keyword id="KW-0670">Pyruvate</keyword>
<keyword id="KW-1185">Reference proteome</keyword>
<keyword id="KW-0949">S-adenosyl-L-methionine</keyword>
<keyword id="KW-0704">Schiff base</keyword>
<keyword id="KW-0745">Spermidine biosynthesis</keyword>
<keyword id="KW-0865">Zymogen</keyword>
<reference key="1">
    <citation type="journal article" date="2002" name="Genome Res.">
        <title>A complete sequence of the T. tengcongensis genome.</title>
        <authorList>
            <person name="Bao Q."/>
            <person name="Tian Y."/>
            <person name="Li W."/>
            <person name="Xu Z."/>
            <person name="Xuan Z."/>
            <person name="Hu S."/>
            <person name="Dong W."/>
            <person name="Yang J."/>
            <person name="Chen Y."/>
            <person name="Xue Y."/>
            <person name="Xu Y."/>
            <person name="Lai X."/>
            <person name="Huang L."/>
            <person name="Dong X."/>
            <person name="Ma Y."/>
            <person name="Ling L."/>
            <person name="Tan H."/>
            <person name="Chen R."/>
            <person name="Wang J."/>
            <person name="Yu J."/>
            <person name="Yang H."/>
        </authorList>
    </citation>
    <scope>NUCLEOTIDE SEQUENCE [LARGE SCALE GENOMIC DNA]</scope>
    <source>
        <strain>DSM 15242 / JCM 11007 / NBRC 100824 / MB4</strain>
    </source>
</reference>
<evidence type="ECO:0000255" key="1">
    <source>
        <dbReference type="HAMAP-Rule" id="MF_00464"/>
    </source>
</evidence>
<proteinExistence type="inferred from homology"/>
<gene>
    <name evidence="1" type="primary">speH</name>
    <name type="synonym">speD</name>
    <name type="ordered locus">TTE1354</name>
</gene>
<sequence length="124" mass="13674">MNALGRHILAEVYGCDSRILDDVEMIEDIMVQAAIATGAEVREVAFHKFNPQGVSGVVVISESHLTIHTWPELGYAAVDVFTCGDHVNPWDGVNYIARMLKAENMTATEVKRGVFEKPVKVANF</sequence>
<feature type="chain" id="PRO_0000030125" description="S-adenosylmethionine decarboxylase beta chain" evidence="1">
    <location>
        <begin position="1"/>
        <end position="62"/>
    </location>
</feature>
<feature type="chain" id="PRO_0000030126" description="S-adenosylmethionine decarboxylase alpha chain" evidence="1">
    <location>
        <begin position="63"/>
        <end position="124"/>
    </location>
</feature>
<feature type="active site" description="Schiff-base intermediate with substrate; via pyruvic acid" evidence="1">
    <location>
        <position position="63"/>
    </location>
</feature>
<feature type="active site" description="Proton acceptor; for processing activity" evidence="1">
    <location>
        <position position="68"/>
    </location>
</feature>
<feature type="active site" description="Proton donor; for catalytic activity" evidence="1">
    <location>
        <position position="83"/>
    </location>
</feature>
<feature type="site" description="Cleavage (non-hydrolytic); by autolysis" evidence="1">
    <location>
        <begin position="62"/>
        <end position="63"/>
    </location>
</feature>
<feature type="modified residue" description="Pyruvic acid (Ser); by autocatalysis" evidence="1">
    <location>
        <position position="63"/>
    </location>
</feature>
<accession>Q8RA74</accession>
<dbReference type="EC" id="4.1.1.50" evidence="1"/>
<dbReference type="EMBL" id="AE008691">
    <property type="protein sequence ID" value="AAM24576.1"/>
    <property type="molecule type" value="Genomic_DNA"/>
</dbReference>
<dbReference type="RefSeq" id="WP_011025649.1">
    <property type="nucleotide sequence ID" value="NZ_JANUCV010000001.1"/>
</dbReference>
<dbReference type="SMR" id="Q8RA74"/>
<dbReference type="STRING" id="273068.TTE1354"/>
<dbReference type="KEGG" id="tte:TTE1354"/>
<dbReference type="eggNOG" id="COG1586">
    <property type="taxonomic scope" value="Bacteria"/>
</dbReference>
<dbReference type="HOGENOM" id="CLU_125470_2_3_9"/>
<dbReference type="OrthoDB" id="9793120at2"/>
<dbReference type="UniPathway" id="UPA00331">
    <property type="reaction ID" value="UER00451"/>
</dbReference>
<dbReference type="Proteomes" id="UP000000555">
    <property type="component" value="Chromosome"/>
</dbReference>
<dbReference type="GO" id="GO:0005829">
    <property type="term" value="C:cytosol"/>
    <property type="evidence" value="ECO:0007669"/>
    <property type="project" value="TreeGrafter"/>
</dbReference>
<dbReference type="GO" id="GO:0004014">
    <property type="term" value="F:adenosylmethionine decarboxylase activity"/>
    <property type="evidence" value="ECO:0007669"/>
    <property type="project" value="UniProtKB-UniRule"/>
</dbReference>
<dbReference type="GO" id="GO:0008295">
    <property type="term" value="P:spermidine biosynthetic process"/>
    <property type="evidence" value="ECO:0007669"/>
    <property type="project" value="UniProtKB-UniRule"/>
</dbReference>
<dbReference type="FunFam" id="3.30.360.110:FF:000001">
    <property type="entry name" value="S-adenosylmethionine decarboxylase proenzyme"/>
    <property type="match status" value="1"/>
</dbReference>
<dbReference type="Gene3D" id="3.30.160.750">
    <property type="match status" value="1"/>
</dbReference>
<dbReference type="Gene3D" id="3.30.360.110">
    <property type="entry name" value="S-adenosylmethionine decarboxylase domain"/>
    <property type="match status" value="1"/>
</dbReference>
<dbReference type="HAMAP" id="MF_00464">
    <property type="entry name" value="AdoMetDC_1"/>
    <property type="match status" value="1"/>
</dbReference>
<dbReference type="InterPro" id="IPR042286">
    <property type="entry name" value="AdoMetDC_C"/>
</dbReference>
<dbReference type="InterPro" id="IPR003826">
    <property type="entry name" value="AdoMetDC_fam_prok"/>
</dbReference>
<dbReference type="InterPro" id="IPR042284">
    <property type="entry name" value="AdoMetDC_N"/>
</dbReference>
<dbReference type="InterPro" id="IPR016067">
    <property type="entry name" value="S-AdoMet_deCO2ase_core"/>
</dbReference>
<dbReference type="InterPro" id="IPR017716">
    <property type="entry name" value="S-AdoMet_deCOase_pro-enz"/>
</dbReference>
<dbReference type="NCBIfam" id="TIGR03330">
    <property type="entry name" value="SAM_DCase_Bsu"/>
    <property type="match status" value="1"/>
</dbReference>
<dbReference type="PANTHER" id="PTHR33866">
    <property type="entry name" value="S-ADENOSYLMETHIONINE DECARBOXYLASE PROENZYME"/>
    <property type="match status" value="1"/>
</dbReference>
<dbReference type="PANTHER" id="PTHR33866:SF2">
    <property type="entry name" value="S-ADENOSYLMETHIONINE DECARBOXYLASE PROENZYME"/>
    <property type="match status" value="1"/>
</dbReference>
<dbReference type="Pfam" id="PF02675">
    <property type="entry name" value="AdoMet_dc"/>
    <property type="match status" value="1"/>
</dbReference>
<dbReference type="SUPFAM" id="SSF56276">
    <property type="entry name" value="S-adenosylmethionine decarboxylase"/>
    <property type="match status" value="1"/>
</dbReference>
<organism>
    <name type="scientific">Caldanaerobacter subterraneus subsp. tengcongensis (strain DSM 15242 / JCM 11007 / NBRC 100824 / MB4)</name>
    <name type="common">Thermoanaerobacter tengcongensis</name>
    <dbReference type="NCBI Taxonomy" id="273068"/>
    <lineage>
        <taxon>Bacteria</taxon>
        <taxon>Bacillati</taxon>
        <taxon>Bacillota</taxon>
        <taxon>Clostridia</taxon>
        <taxon>Thermoanaerobacterales</taxon>
        <taxon>Thermoanaerobacteraceae</taxon>
        <taxon>Caldanaerobacter</taxon>
    </lineage>
</organism>